<evidence type="ECO:0000250" key="1">
    <source>
        <dbReference type="UniProtKB" id="Q9W415"/>
    </source>
</evidence>
<evidence type="ECO:0000255" key="2">
    <source>
        <dbReference type="HAMAP-Rule" id="MF_03056"/>
    </source>
</evidence>
<keyword id="KW-0963">Cytoplasm</keyword>
<keyword id="KW-0217">Developmental protein</keyword>
<keyword id="KW-0221">Differentiation</keyword>
<keyword id="KW-0539">Nucleus</keyword>
<keyword id="KW-0896">Oogenesis</keyword>
<keyword id="KW-1185">Reference proteome</keyword>
<keyword id="KW-0677">Repeat</keyword>
<keyword id="KW-0744">Spermatogenesis</keyword>
<keyword id="KW-0819">tRNA processing</keyword>
<keyword id="KW-0853">WD repeat</keyword>
<sequence>MTTIFYAEPELVIAYGRKVLFLNPNDLQIFKDIELPADLTSCGLKITAPEISEEQQSTSEGKGTDGGKVEVAILNVCYSPDRQLIALTTAGQKALLLYKSRPEHAKLLSVRALARASSAMTFAADSSSVLVTDKTGDCYQYDCVEVNALPRLLLGHLSIVYDILWTPDQKHIITSDRDDKIRVTNYPATFDIHSYCLGHKEFVSGLALLTEEHLLSVSGDKTLRLWNYLSGMELLHHDLPAPAVRLHMRELLPAKRYQAAVQFYDHIEAIGLYELEQTNNIWTVACEQLVRAEAGSWNISNFALTSDMIYVAGAVNEHLALRVYNASDGEQAKTVPAGWLDMVTGSFSDQTCVPEDLSVWFKKRYDNVSDYMERKKRRIEGQQQK</sequence>
<reference key="1">
    <citation type="journal article" date="2007" name="Nature">
        <title>Evolution of genes and genomes on the Drosophila phylogeny.</title>
        <authorList>
            <consortium name="Drosophila 12 genomes consortium"/>
        </authorList>
    </citation>
    <scope>NUCLEOTIDE SEQUENCE [LARGE SCALE GENOMIC DNA]</scope>
    <source>
        <strain>Tucson 15287-2541.00</strain>
    </source>
</reference>
<feature type="chain" id="PRO_0000370544" description="tRNA (guanine-N(7)-)-methyltransferase non-catalytic subunit wuho">
    <location>
        <begin position="1"/>
        <end position="385"/>
    </location>
</feature>
<feature type="repeat" description="WD 1">
    <location>
        <begin position="68"/>
        <end position="108"/>
    </location>
</feature>
<feature type="repeat" description="WD 2">
    <location>
        <begin position="155"/>
        <end position="194"/>
    </location>
</feature>
<feature type="repeat" description="WD 3">
    <location>
        <begin position="198"/>
        <end position="236"/>
    </location>
</feature>
<organism>
    <name type="scientific">Drosophila grimshawi</name>
    <name type="common">Hawaiian fruit fly</name>
    <name type="synonym">Idiomyia grimshawi</name>
    <dbReference type="NCBI Taxonomy" id="7222"/>
    <lineage>
        <taxon>Eukaryota</taxon>
        <taxon>Metazoa</taxon>
        <taxon>Ecdysozoa</taxon>
        <taxon>Arthropoda</taxon>
        <taxon>Hexapoda</taxon>
        <taxon>Insecta</taxon>
        <taxon>Pterygota</taxon>
        <taxon>Neoptera</taxon>
        <taxon>Endopterygota</taxon>
        <taxon>Diptera</taxon>
        <taxon>Brachycera</taxon>
        <taxon>Muscomorpha</taxon>
        <taxon>Ephydroidea</taxon>
        <taxon>Drosophilidae</taxon>
        <taxon>Drosophila</taxon>
        <taxon>Hawaiian Drosophila</taxon>
    </lineage>
</organism>
<accession>B4JWS7</accession>
<gene>
    <name evidence="2" type="primary">wuho</name>
    <name type="ORF">GH17702</name>
</gene>
<dbReference type="EMBL" id="CH916376">
    <property type="protein sequence ID" value="EDV95203.1"/>
    <property type="molecule type" value="Genomic_DNA"/>
</dbReference>
<dbReference type="SMR" id="B4JWS7"/>
<dbReference type="FunCoup" id="B4JWS7">
    <property type="interactions" value="637"/>
</dbReference>
<dbReference type="STRING" id="7222.B4JWS7"/>
<dbReference type="EnsemblMetazoa" id="FBtr0153116">
    <property type="protein sequence ID" value="FBpp0151608"/>
    <property type="gene ID" value="FBgn0125172"/>
</dbReference>
<dbReference type="EnsemblMetazoa" id="XM_001995515.2">
    <property type="protein sequence ID" value="XP_001995551.1"/>
    <property type="gene ID" value="LOC6569215"/>
</dbReference>
<dbReference type="GeneID" id="6569215"/>
<dbReference type="KEGG" id="dgr:6569215"/>
<dbReference type="CTD" id="31566"/>
<dbReference type="eggNOG" id="KOG3914">
    <property type="taxonomic scope" value="Eukaryota"/>
</dbReference>
<dbReference type="HOGENOM" id="CLU_054270_0_0_1"/>
<dbReference type="InParanoid" id="B4JWS7"/>
<dbReference type="OMA" id="SVWFKKR"/>
<dbReference type="OrthoDB" id="371245at2759"/>
<dbReference type="PhylomeDB" id="B4JWS7"/>
<dbReference type="UniPathway" id="UPA00989"/>
<dbReference type="Proteomes" id="UP000001070">
    <property type="component" value="Unassembled WGS sequence"/>
</dbReference>
<dbReference type="GO" id="GO:0005829">
    <property type="term" value="C:cytosol"/>
    <property type="evidence" value="ECO:0007669"/>
    <property type="project" value="TreeGrafter"/>
</dbReference>
<dbReference type="GO" id="GO:0001674">
    <property type="term" value="C:female germ cell nucleus"/>
    <property type="evidence" value="ECO:0000250"/>
    <property type="project" value="UniProtKB"/>
</dbReference>
<dbReference type="GO" id="GO:0001673">
    <property type="term" value="C:male germ cell nucleus"/>
    <property type="evidence" value="ECO:0000250"/>
    <property type="project" value="UniProtKB"/>
</dbReference>
<dbReference type="GO" id="GO:0005634">
    <property type="term" value="C:nucleus"/>
    <property type="evidence" value="ECO:0000250"/>
    <property type="project" value="UniProtKB"/>
</dbReference>
<dbReference type="GO" id="GO:0043527">
    <property type="term" value="C:tRNA methyltransferase complex"/>
    <property type="evidence" value="ECO:0007669"/>
    <property type="project" value="TreeGrafter"/>
</dbReference>
<dbReference type="GO" id="GO:0048477">
    <property type="term" value="P:oogenesis"/>
    <property type="evidence" value="ECO:0000250"/>
    <property type="project" value="UniProtKB"/>
</dbReference>
<dbReference type="GO" id="GO:0007283">
    <property type="term" value="P:spermatogenesis"/>
    <property type="evidence" value="ECO:0000250"/>
    <property type="project" value="UniProtKB"/>
</dbReference>
<dbReference type="GO" id="GO:0106004">
    <property type="term" value="P:tRNA (guanine-N7)-methylation"/>
    <property type="evidence" value="ECO:0007669"/>
    <property type="project" value="UniProtKB-UniRule"/>
</dbReference>
<dbReference type="FunFam" id="2.130.10.10:FF:002617">
    <property type="entry name" value="tRNA (guanine-N(7)-)-methyltransferase non-catalytic subunit wuho"/>
    <property type="match status" value="1"/>
</dbReference>
<dbReference type="Gene3D" id="2.130.10.10">
    <property type="entry name" value="YVTN repeat-like/Quinoprotein amine dehydrogenase"/>
    <property type="match status" value="1"/>
</dbReference>
<dbReference type="HAMAP" id="MF_03056">
    <property type="entry name" value="TRM82"/>
    <property type="match status" value="1"/>
</dbReference>
<dbReference type="InterPro" id="IPR028884">
    <property type="entry name" value="Trm82"/>
</dbReference>
<dbReference type="InterPro" id="IPR015943">
    <property type="entry name" value="WD40/YVTN_repeat-like_dom_sf"/>
</dbReference>
<dbReference type="InterPro" id="IPR001680">
    <property type="entry name" value="WD40_rpt"/>
</dbReference>
<dbReference type="PANTHER" id="PTHR16288:SF0">
    <property type="entry name" value="TRNA (GUANINE-N(7)-)-METHYLTRANSFERASE NON-CATALYTIC SUBUNIT WDR4"/>
    <property type="match status" value="1"/>
</dbReference>
<dbReference type="PANTHER" id="PTHR16288">
    <property type="entry name" value="WD40 REPEAT PROTEIN 4"/>
    <property type="match status" value="1"/>
</dbReference>
<dbReference type="Pfam" id="PF00400">
    <property type="entry name" value="WD40"/>
    <property type="match status" value="2"/>
</dbReference>
<dbReference type="SMART" id="SM00320">
    <property type="entry name" value="WD40"/>
    <property type="match status" value="2"/>
</dbReference>
<dbReference type="SUPFAM" id="SSF50960">
    <property type="entry name" value="TolB, C-terminal domain"/>
    <property type="match status" value="1"/>
</dbReference>
<dbReference type="PROSITE" id="PS50082">
    <property type="entry name" value="WD_REPEATS_2"/>
    <property type="match status" value="2"/>
</dbReference>
<dbReference type="PROSITE" id="PS50294">
    <property type="entry name" value="WD_REPEATS_REGION"/>
    <property type="match status" value="1"/>
</dbReference>
<comment type="function">
    <text evidence="1 2">Required for the Mettl1-dependent formation of N(7)-methylguanine at position 46 (m7G46) in tRNA (By similarity). In the Mettl1-wuho methyltransferase complex, it is required to stabilize and induce conformational changes of the catalytic subunit (By similarity). Required for binding of nanos mRNA and repression of translation by the mei-P26-bgcn-bam-sxl complex. May cooperate with mei-P26 and nanos to derepress the BMP signaling pathway. May cooperate with mei-P26 to suppress expression of a subset of microRNAs. May cooperate with mei-P26 to regulate bam expression levels in germline cells during gametogenesis. Required to promote mitosis to meiosis transition during gametogenesis. May regulate germline cell division in part by regulating ribosome biogenesis (By similarity).</text>
</comment>
<comment type="pathway">
    <text evidence="2">tRNA modification; N(7)-methylguanine-tRNA biosynthesis.</text>
</comment>
<comment type="subunit">
    <text evidence="1 2">Forms a heterodimer with the catalytic subunit Mettl1 (By similarity). Interacts with mei-P26 and weakly interacts with bgcn; required for the function or formation of the mei-P26-bgcn-bam-sxl complex. Interacts with nanos; may be involved in mei-P26-dependent derepression of the BMP signaling pathway. Interacts with Myc; the interaction may be mediated by mei-P26 and may be involved in the regulation of ribosome biogenesis (By similarity).</text>
</comment>
<comment type="subcellular location">
    <subcellularLocation>
        <location evidence="1 2">Nucleus</location>
    </subcellularLocation>
    <subcellularLocation>
        <location evidence="1">Cytoplasm</location>
    </subcellularLocation>
    <text evidence="1">Localized to the nuclei of nurse cells, follicle cells and oocytes at early stages, from germarium to stage 4 egg chambers. Also present in the nuclei of spermatocytes and in the apical cells of the testes. In the cytoplasm of all germline and somatic cells of the ovary.</text>
</comment>
<comment type="tissue specificity">
    <text evidence="1">In testis, it is present at high level in hub cells, a niche for germline stem cells of testis. Ubiquitously expressed in all testicular cells throughout spermatogenesis. Ubiquitously expressed in all germline and somatic cells of the ovary.</text>
</comment>
<comment type="miscellaneous">
    <text evidence="1">Wuho means 'no progeny' in Chinese.</text>
</comment>
<comment type="similarity">
    <text evidence="2">Belongs to the WD repeat TRM82 family.</text>
</comment>
<proteinExistence type="inferred from homology"/>
<protein>
    <recommendedName>
        <fullName evidence="2">tRNA (guanine-N(7)-)-methyltransferase non-catalytic subunit wuho</fullName>
    </recommendedName>
</protein>
<name>WUHO_DROGR</name>